<dbReference type="EMBL" id="U16684">
    <property type="protein sequence ID" value="AAA91972.1"/>
    <property type="molecule type" value="mRNA"/>
</dbReference>
<dbReference type="EMBL" id="U50355">
    <property type="protein sequence ID" value="AAC99552.1"/>
    <property type="molecule type" value="Genomic_DNA"/>
</dbReference>
<dbReference type="PIR" id="C60113">
    <property type="entry name" value="A61014"/>
</dbReference>
<dbReference type="RefSeq" id="NP_775421.1">
    <property type="nucleotide sequence ID" value="NM_173299.3"/>
</dbReference>
<dbReference type="SMR" id="Q62714"/>
<dbReference type="FunCoup" id="Q62714">
    <property type="interactions" value="157"/>
</dbReference>
<dbReference type="PaxDb" id="10116-ENSRNOP00000036962"/>
<dbReference type="GeneID" id="286958"/>
<dbReference type="KEGG" id="rno:286958"/>
<dbReference type="UCSC" id="RGD:727857">
    <property type="organism name" value="rat"/>
</dbReference>
<dbReference type="AGR" id="RGD:727857"/>
<dbReference type="CTD" id="286958"/>
<dbReference type="RGD" id="727857">
    <property type="gene designation" value="Np4"/>
</dbReference>
<dbReference type="VEuPathDB" id="HostDB:ENSRNOG00000069755"/>
<dbReference type="HOGENOM" id="CLU_160803_3_0_1"/>
<dbReference type="InParanoid" id="Q62714"/>
<dbReference type="OrthoDB" id="9837636at2759"/>
<dbReference type="PhylomeDB" id="Q62714"/>
<dbReference type="TreeFam" id="TF338414"/>
<dbReference type="Reactome" id="R-RNO-1461973">
    <property type="pathway name" value="Defensins"/>
</dbReference>
<dbReference type="Reactome" id="R-RNO-1462054">
    <property type="pathway name" value="Alpha-defensins"/>
</dbReference>
<dbReference type="Reactome" id="R-RNO-6798695">
    <property type="pathway name" value="Neutrophil degranulation"/>
</dbReference>
<dbReference type="PRO" id="PR:Q62714"/>
<dbReference type="Proteomes" id="UP000002494">
    <property type="component" value="Chromosome 16"/>
</dbReference>
<dbReference type="Bgee" id="ENSRNOG00000028707">
    <property type="expression patterns" value="Expressed in thymus and 10 other cell types or tissues"/>
</dbReference>
<dbReference type="ExpressionAtlas" id="Q62714">
    <property type="expression patterns" value="baseline and differential"/>
</dbReference>
<dbReference type="GO" id="GO:0042582">
    <property type="term" value="C:azurophil granule"/>
    <property type="evidence" value="ECO:0000266"/>
    <property type="project" value="RGD"/>
</dbReference>
<dbReference type="GO" id="GO:0005615">
    <property type="term" value="C:extracellular space"/>
    <property type="evidence" value="ECO:0000318"/>
    <property type="project" value="GO_Central"/>
</dbReference>
<dbReference type="GO" id="GO:0042803">
    <property type="term" value="F:protein homodimerization activity"/>
    <property type="evidence" value="ECO:0000266"/>
    <property type="project" value="RGD"/>
</dbReference>
<dbReference type="GO" id="GO:0019731">
    <property type="term" value="P:antibacterial humoral response"/>
    <property type="evidence" value="ECO:0000318"/>
    <property type="project" value="GO_Central"/>
</dbReference>
<dbReference type="GO" id="GO:0061844">
    <property type="term" value="P:antimicrobial humoral immune response mediated by antimicrobial peptide"/>
    <property type="evidence" value="ECO:0000266"/>
    <property type="project" value="RGD"/>
</dbReference>
<dbReference type="GO" id="GO:0071222">
    <property type="term" value="P:cellular response to lipopolysaccharide"/>
    <property type="evidence" value="ECO:0000318"/>
    <property type="project" value="GO_Central"/>
</dbReference>
<dbReference type="GO" id="GO:0006952">
    <property type="term" value="P:defense response"/>
    <property type="evidence" value="ECO:0000304"/>
    <property type="project" value="RGD"/>
</dbReference>
<dbReference type="GO" id="GO:0050832">
    <property type="term" value="P:defense response to fungus"/>
    <property type="evidence" value="ECO:0007669"/>
    <property type="project" value="UniProtKB-KW"/>
</dbReference>
<dbReference type="GO" id="GO:0050829">
    <property type="term" value="P:defense response to Gram-negative bacterium"/>
    <property type="evidence" value="ECO:0000318"/>
    <property type="project" value="GO_Central"/>
</dbReference>
<dbReference type="GO" id="GO:0050830">
    <property type="term" value="P:defense response to Gram-positive bacterium"/>
    <property type="evidence" value="ECO:0000318"/>
    <property type="project" value="GO_Central"/>
</dbReference>
<dbReference type="GO" id="GO:0051673">
    <property type="term" value="P:disruption of plasma membrane integrity in another organism"/>
    <property type="evidence" value="ECO:0000318"/>
    <property type="project" value="GO_Central"/>
</dbReference>
<dbReference type="GO" id="GO:0045087">
    <property type="term" value="P:innate immune response"/>
    <property type="evidence" value="ECO:0000266"/>
    <property type="project" value="RGD"/>
</dbReference>
<dbReference type="GO" id="GO:0002227">
    <property type="term" value="P:innate immune response in mucosa"/>
    <property type="evidence" value="ECO:0000318"/>
    <property type="project" value="GO_Central"/>
</dbReference>
<dbReference type="GO" id="GO:0031640">
    <property type="term" value="P:killing of cells of another organism"/>
    <property type="evidence" value="ECO:0007669"/>
    <property type="project" value="UniProtKB-KW"/>
</dbReference>
<dbReference type="InterPro" id="IPR016327">
    <property type="entry name" value="Alpha-defensin"/>
</dbReference>
<dbReference type="InterPro" id="IPR006081">
    <property type="entry name" value="Alpha-defensin_C"/>
</dbReference>
<dbReference type="InterPro" id="IPR002366">
    <property type="entry name" value="Alpha-defensin_N"/>
</dbReference>
<dbReference type="InterPro" id="IPR006080">
    <property type="entry name" value="Beta/alpha-defensin_C"/>
</dbReference>
<dbReference type="PANTHER" id="PTHR11876">
    <property type="entry name" value="ALPHA-DEFENSIN 1"/>
    <property type="match status" value="1"/>
</dbReference>
<dbReference type="PANTHER" id="PTHR11876:SF31">
    <property type="entry name" value="DEFENSIN ALPHA 10-RELATED"/>
    <property type="match status" value="1"/>
</dbReference>
<dbReference type="Pfam" id="PF00323">
    <property type="entry name" value="Defensin_1"/>
    <property type="match status" value="1"/>
</dbReference>
<dbReference type="Pfam" id="PF00879">
    <property type="entry name" value="Defensin_propep"/>
    <property type="match status" value="1"/>
</dbReference>
<dbReference type="PIRSF" id="PIRSF001875">
    <property type="entry name" value="Alpha-defensin"/>
    <property type="match status" value="1"/>
</dbReference>
<dbReference type="SMART" id="SM01418">
    <property type="entry name" value="Defensin_propep"/>
    <property type="match status" value="1"/>
</dbReference>
<dbReference type="SMART" id="SM00048">
    <property type="entry name" value="DEFSN"/>
    <property type="match status" value="1"/>
</dbReference>
<dbReference type="SUPFAM" id="SSF57392">
    <property type="entry name" value="Defensin-like"/>
    <property type="match status" value="1"/>
</dbReference>
<dbReference type="PROSITE" id="PS00269">
    <property type="entry name" value="DEFENSIN"/>
    <property type="match status" value="1"/>
</dbReference>
<proteinExistence type="evidence at protein level"/>
<name>DEF4_RAT</name>
<keyword id="KW-0044">Antibiotic</keyword>
<keyword id="KW-0929">Antimicrobial</keyword>
<keyword id="KW-0211">Defensin</keyword>
<keyword id="KW-0903">Direct protein sequencing</keyword>
<keyword id="KW-1015">Disulfide bond</keyword>
<keyword id="KW-0295">Fungicide</keyword>
<keyword id="KW-1185">Reference proteome</keyword>
<keyword id="KW-0964">Secreted</keyword>
<keyword id="KW-0732">Signal</keyword>
<sequence>MRTLTLLITLLLLALHTQAESPQERAKAAPDQDMVMEDQDIFISFGGYKGTVLQDAVVKAGQACYCRIGACVSGERLTGACGLNGRIYRLCCR</sequence>
<evidence type="ECO:0000250" key="1">
    <source>
        <dbReference type="UniProtKB" id="P12838"/>
    </source>
</evidence>
<evidence type="ECO:0000250" key="2">
    <source>
        <dbReference type="UniProtKB" id="P28311"/>
    </source>
</evidence>
<evidence type="ECO:0000250" key="3">
    <source>
        <dbReference type="UniProtKB" id="Q01523"/>
    </source>
</evidence>
<evidence type="ECO:0000255" key="4"/>
<evidence type="ECO:0000269" key="5">
    <source>
    </source>
</evidence>
<evidence type="ECO:0000269" key="6">
    <source>
    </source>
</evidence>
<evidence type="ECO:0000303" key="7">
    <source>
    </source>
</evidence>
<evidence type="ECO:0000305" key="8"/>
<gene>
    <name evidence="7" type="primary">Np4</name>
</gene>
<organism>
    <name type="scientific">Rattus norvegicus</name>
    <name type="common">Rat</name>
    <dbReference type="NCBI Taxonomy" id="10116"/>
    <lineage>
        <taxon>Eukaryota</taxon>
        <taxon>Metazoa</taxon>
        <taxon>Chordata</taxon>
        <taxon>Craniata</taxon>
        <taxon>Vertebrata</taxon>
        <taxon>Euteleostomi</taxon>
        <taxon>Mammalia</taxon>
        <taxon>Eutheria</taxon>
        <taxon>Euarchontoglires</taxon>
        <taxon>Glires</taxon>
        <taxon>Rodentia</taxon>
        <taxon>Myomorpha</taxon>
        <taxon>Muroidea</taxon>
        <taxon>Muridae</taxon>
        <taxon>Murinae</taxon>
        <taxon>Rattus</taxon>
    </lineage>
</organism>
<feature type="signal peptide" evidence="4">
    <location>
        <begin position="1"/>
        <end position="19"/>
    </location>
</feature>
<feature type="propeptide" id="PRO_0000006867" evidence="4">
    <location>
        <begin position="20"/>
        <end position="62"/>
    </location>
</feature>
<feature type="peptide" id="PRO_0000006868" description="Defensin alpha 4">
    <location>
        <begin position="63"/>
        <end position="93"/>
    </location>
</feature>
<feature type="disulfide bond" evidence="2">
    <location>
        <begin position="64"/>
        <end position="92"/>
    </location>
</feature>
<feature type="disulfide bond" evidence="2">
    <location>
        <begin position="66"/>
        <end position="81"/>
    </location>
</feature>
<feature type="disulfide bond" evidence="2">
    <location>
        <begin position="71"/>
        <end position="91"/>
    </location>
</feature>
<reference key="1">
    <citation type="journal article" date="1995" name="J. Immunol.">
        <title>Rat neutrophil defensins. Precursor structures and expression during neutrophilic myelopoiesis.</title>
        <authorList>
            <person name="Yount N.Y."/>
            <person name="Wang M.-S.C."/>
            <person name="Yuan J."/>
            <person name="Banaiee N."/>
            <person name="Ouellette A.J."/>
            <person name="Selsted M.E."/>
        </authorList>
    </citation>
    <scope>NUCLEOTIDE SEQUENCE [MRNA]</scope>
    <scope>TISSUE SPECIFICITY</scope>
    <source>
        <strain>Sprague-Dawley</strain>
        <tissue>Bone marrow</tissue>
    </source>
</reference>
<reference key="2">
    <citation type="submission" date="1996-02" db="EMBL/GenBank/DDBJ databases">
        <title>Molecular characterization of genes encoding rat neutrophil defensins.</title>
        <authorList>
            <person name="Banaiee N."/>
            <person name="Yount N.Y."/>
            <person name="Selsted M.E."/>
        </authorList>
    </citation>
    <scope>NUCLEOTIDE SEQUENCE</scope>
    <source>
        <strain>Sprague-Dawley</strain>
        <tissue>Neutrophil</tissue>
    </source>
</reference>
<reference key="3">
    <citation type="journal article" date="1989" name="Infect. Immun.">
        <title>Purification and antimicrobial properties of three defensins from rat neutrophils.</title>
        <authorList>
            <person name="Eisenhauer P.B."/>
            <person name="Harwig S.S.S.L."/>
            <person name="Szklarek D."/>
            <person name="Ganz T."/>
            <person name="Selsted M.E."/>
            <person name="Lehrer R.I."/>
        </authorList>
    </citation>
    <scope>PROTEIN SEQUENCE OF 63-93</scope>
    <scope>FUNCTION</scope>
    <scope>TISSUE SPECIFICITY</scope>
    <source>
        <strain>Sprague-Dawley</strain>
        <tissue>Peritoneal neutrophil</tissue>
    </source>
</reference>
<comment type="function">
    <text evidence="5">Host-defense peptide that has antimicrobial activity against Gram-positive and Gram-negative bacteria and fungi (in vitro) (PubMed:2543629). Exhibits activity against E.coli, A.calcoaceticus, S,aureus and C.albicans (PubMed:2543629).</text>
</comment>
<comment type="subcellular location">
    <subcellularLocation>
        <location evidence="3">Secreted</location>
    </subcellularLocation>
</comment>
<comment type="tissue specificity">
    <text evidence="5 6">Expressed in neutrophils (at protein level) (PubMed:2543629). Highest expression in bone marrow and to a much lesser extent in small intestine (PubMed:7594610).</text>
</comment>
<comment type="similarity">
    <text evidence="8">Belongs to the alpha-defensin family.</text>
</comment>
<accession>Q62714</accession>
<protein>
    <recommendedName>
        <fullName evidence="1">Defensin alpha 4</fullName>
    </recommendedName>
    <alternativeName>
        <fullName evidence="7">Neutrophil antibiotic peptide NP-4</fullName>
        <shortName evidence="7">RatNP-4</shortName>
    </alternativeName>
    <alternativeName>
        <fullName evidence="7">Neutrophil defensin 4</fullName>
    </alternativeName>
</protein>